<organismHost>
    <name type="scientific">Homo sapiens</name>
    <name type="common">Human</name>
    <dbReference type="NCBI Taxonomy" id="9606"/>
</organismHost>
<organismHost>
    <name type="scientific">Mammalia</name>
    <dbReference type="NCBI Taxonomy" id="40674"/>
</organismHost>
<keyword id="KW-0024">Alternative initiation</keyword>
<keyword id="KW-0143">Chaperone</keyword>
<keyword id="KW-1035">Host cytoplasm</keyword>
<keyword id="KW-1048">Host nucleus</keyword>
<keyword id="KW-0945">Host-virus interaction</keyword>
<keyword id="KW-1090">Inhibition of host innate immune response by virus</keyword>
<keyword id="KW-1114">Inhibition of host interferon signaling pathway by virus</keyword>
<keyword id="KW-1105">Inhibition of host STAT1 by virus</keyword>
<keyword id="KW-1106">Inhibition of host STAT2 by virus</keyword>
<keyword id="KW-0922">Interferon antiviral system evasion</keyword>
<keyword id="KW-0597">Phosphoprotein</keyword>
<keyword id="KW-0899">Viral immunoevasion</keyword>
<keyword id="KW-0693">Viral RNA replication</keyword>
<keyword id="KW-0946">Virion</keyword>
<protein>
    <recommendedName>
        <fullName>Phosphoprotein</fullName>
        <shortName>Protein P</shortName>
    </recommendedName>
    <alternativeName>
        <fullName>Protein M1</fullName>
    </alternativeName>
</protein>
<sequence>MSKGLIHPSAIRSGLVDLEMAEETVDLVHKNLADSQAHLQGEPLNVDSLPEDMRKMRLTNAPSEREIIEEDEEEYSSEDEYYLSQGQDPMVPFQNFLDELGTQIVRRMKSGDGFFKIWSAASEDIKGYVLSTFMKPETQATVSKPTQTDSLSVPRPSQGYTSVPRDKPSNSESQGGGVKPKKVQKSEWTRDTDEISDIEGEVAHQVAESFSKKYKFPSRSSGIFLWNFEQLKMNLDDIVKTSMNVPGVDKIAEKGGKLPLRCILGFVSLDSSKRFRLLADTDKVARLMQDDIHNYMTRIEEIDHN</sequence>
<name>PHOSP_LBV</name>
<feature type="chain" id="PRO_0000299097" description="Phosphoprotein">
    <location>
        <begin position="1"/>
        <end position="305"/>
    </location>
</feature>
<feature type="region of interest" description="Disordered" evidence="2">
    <location>
        <begin position="139"/>
        <end position="195"/>
    </location>
</feature>
<feature type="short sequence motif" description="Nuclear export signal" evidence="1">
    <location>
        <begin position="49"/>
        <end position="58"/>
    </location>
</feature>
<feature type="short sequence motif" description="Nuclear localization signal" evidence="1">
    <location>
        <begin position="212"/>
        <end position="215"/>
    </location>
</feature>
<feature type="compositionally biased region" description="Polar residues" evidence="2">
    <location>
        <begin position="139"/>
        <end position="151"/>
    </location>
</feature>
<feature type="compositionally biased region" description="Basic and acidic residues" evidence="2">
    <location>
        <begin position="184"/>
        <end position="193"/>
    </location>
</feature>
<feature type="modified residue" description="Phosphoserine; by host" evidence="1">
    <location>
        <position position="63"/>
    </location>
</feature>
<feature type="modified residue" description="Phosphoserine; by host PKC" evidence="1">
    <location>
        <position position="211"/>
    </location>
</feature>
<feature type="modified residue" description="Phosphoserine; by host PKC" evidence="1">
    <location>
        <position position="272"/>
    </location>
</feature>
<feature type="splice variant" id="VSP_027561" description="In isoform P3." evidence="3">
    <location>
        <begin position="1"/>
        <end position="52"/>
    </location>
</feature>
<feature type="splice variant" id="VSP_027562" description="In isoform P2." evidence="3">
    <location>
        <begin position="1"/>
        <end position="19"/>
    </location>
</feature>
<dbReference type="EMBL" id="AF049114">
    <property type="protein sequence ID" value="AAC04584.1"/>
    <property type="molecule type" value="mRNA"/>
</dbReference>
<dbReference type="SMR" id="O56773"/>
<dbReference type="GO" id="GO:0030430">
    <property type="term" value="C:host cell cytoplasm"/>
    <property type="evidence" value="ECO:0007669"/>
    <property type="project" value="UniProtKB-SubCell"/>
</dbReference>
<dbReference type="GO" id="GO:0042025">
    <property type="term" value="C:host cell nucleus"/>
    <property type="evidence" value="ECO:0007669"/>
    <property type="project" value="UniProtKB-SubCell"/>
</dbReference>
<dbReference type="GO" id="GO:0044423">
    <property type="term" value="C:virion component"/>
    <property type="evidence" value="ECO:0007669"/>
    <property type="project" value="UniProtKB-KW"/>
</dbReference>
<dbReference type="GO" id="GO:0003968">
    <property type="term" value="F:RNA-directed RNA polymerase activity"/>
    <property type="evidence" value="ECO:0007669"/>
    <property type="project" value="InterPro"/>
</dbReference>
<dbReference type="GO" id="GO:0052170">
    <property type="term" value="P:symbiont-mediated suppression of host innate immune response"/>
    <property type="evidence" value="ECO:0007669"/>
    <property type="project" value="UniProtKB-KW"/>
</dbReference>
<dbReference type="GO" id="GO:0039563">
    <property type="term" value="P:symbiont-mediated suppression of host JAK-STAT cascade via inhibition of STAT1 activity"/>
    <property type="evidence" value="ECO:0007669"/>
    <property type="project" value="UniProtKB-KW"/>
</dbReference>
<dbReference type="GO" id="GO:0039564">
    <property type="term" value="P:symbiont-mediated suppression of host JAK-STAT cascade via inhibition of STAT2 activity"/>
    <property type="evidence" value="ECO:0007669"/>
    <property type="project" value="UniProtKB-KW"/>
</dbReference>
<dbReference type="GO" id="GO:0039502">
    <property type="term" value="P:symbiont-mediated suppression of host type I interferon-mediated signaling pathway"/>
    <property type="evidence" value="ECO:0007669"/>
    <property type="project" value="UniProtKB-KW"/>
</dbReference>
<dbReference type="GO" id="GO:0019083">
    <property type="term" value="P:viral transcription"/>
    <property type="evidence" value="ECO:0007669"/>
    <property type="project" value="InterPro"/>
</dbReference>
<dbReference type="Gene3D" id="6.10.140.1560">
    <property type="match status" value="1"/>
</dbReference>
<dbReference type="Gene3D" id="1.20.120.820">
    <property type="entry name" value="Phosphoprotein, C-terminal domain"/>
    <property type="match status" value="1"/>
</dbReference>
<dbReference type="InterPro" id="IPR004259">
    <property type="entry name" value="PP_M1-like"/>
</dbReference>
<dbReference type="InterPro" id="IPR037199">
    <property type="entry name" value="PP_M1_C"/>
</dbReference>
<dbReference type="Pfam" id="PF03012">
    <property type="entry name" value="PP_M1"/>
    <property type="match status" value="1"/>
</dbReference>
<dbReference type="SUPFAM" id="SSF118173">
    <property type="entry name" value="Phosphoprotein M1, C-terminal domain"/>
    <property type="match status" value="1"/>
</dbReference>
<evidence type="ECO:0000250" key="1"/>
<evidence type="ECO:0000256" key="2">
    <source>
        <dbReference type="SAM" id="MobiDB-lite"/>
    </source>
</evidence>
<evidence type="ECO:0000305" key="3"/>
<gene>
    <name type="primary">P</name>
</gene>
<proteinExistence type="evidence at transcript level"/>
<accession>O56773</accession>
<reference key="1">
    <citation type="journal article" date="2002" name="Virology">
        <title>Lyssavirus P gene characterisation provides insights into the phylogeny of the genus and identifies structural similarities and diversity within the encoded phosphoprotein.</title>
        <authorList>
            <person name="Nadin-Davis S.A."/>
            <person name="Abdel-Malik M."/>
            <person name="Armstrong J."/>
            <person name="Wandeler A.I."/>
        </authorList>
    </citation>
    <scope>NUCLEOTIDE SEQUENCE [MRNA]</scope>
    <source>
        <strain>Isolate Nigeria/V006/1988</strain>
    </source>
</reference>
<organism>
    <name type="scientific">Lagos bat virus</name>
    <name type="common">LBV</name>
    <dbReference type="NCBI Taxonomy" id="38766"/>
    <lineage>
        <taxon>Viruses</taxon>
        <taxon>Riboviria</taxon>
        <taxon>Orthornavirae</taxon>
        <taxon>Negarnaviricota</taxon>
        <taxon>Haploviricotina</taxon>
        <taxon>Monjiviricetes</taxon>
        <taxon>Mononegavirales</taxon>
        <taxon>Rhabdoviridae</taxon>
        <taxon>Alpharhabdovirinae</taxon>
        <taxon>Lyssavirus</taxon>
    </lineage>
</organism>
<comment type="function">
    <text evidence="1">Non catalytic polymerase cofactor and regulatory protein that plays a role in viral transcription and replication. Stabilizes the RNA polymerase L to the N-RNA template and binds the soluble protein N, preventing it from encapsidating non-genomic RNA. Also inhibits host IFN-alpha and IFN-beta signaling by binding and retaining phosphorylated STAT1 in the cytoplasm or by inhibiting the DNA binding of STAT1 in the nucleus (By similarity).</text>
</comment>
<comment type="subunit">
    <molecule>Phosphoprotein</molecule>
    <text evidence="1">Homotrimer when phosphorylated. This trimer is stabilized by binding to the L protein. Binds soluble protein N, and ribonucleocapsid. Interacts with host STAT1, STAT2, DYNLL1, DYNLL2 and PML.</text>
</comment>
<comment type="subunit">
    <molecule>Isoform P3</molecule>
    <text evidence="1">Binds host PML (By similarity).</text>
</comment>
<comment type="subcellular location">
    <molecule>Phosphoprotein</molecule>
    <subcellularLocation>
        <location>Virion</location>
    </subcellularLocation>
    <subcellularLocation>
        <location evidence="1">Host cytoplasm</location>
    </subcellularLocation>
</comment>
<comment type="subcellular location">
    <molecule>Isoform P2</molecule>
    <subcellularLocation>
        <location evidence="1">Host cytoplasm</location>
    </subcellularLocation>
</comment>
<comment type="subcellular location">
    <molecule>Isoform P3</molecule>
    <subcellularLocation>
        <location evidence="1">Host nucleus</location>
    </subcellularLocation>
</comment>
<comment type="alternative products">
    <event type="alternative initiation"/>
    <isoform>
        <id>O56773-1</id>
        <name>P</name>
        <sequence type="displayed"/>
    </isoform>
    <isoform>
        <id>O56773-2</id>
        <name>P2</name>
        <sequence type="described" ref="VSP_027562"/>
    </isoform>
    <isoform>
        <id>O56773-3</id>
        <name>P3</name>
        <sequence type="described" ref="VSP_027561"/>
    </isoform>
</comment>
<comment type="PTM">
    <text evidence="1">Phosphorylated by host PKC and by an unknown kinase.</text>
</comment>
<comment type="similarity">
    <text evidence="3">Belongs to the lyssavirus protein P family.</text>
</comment>